<protein>
    <recommendedName>
        <fullName evidence="1">Sulfite reductase [NADPH] hemoprotein beta-component</fullName>
        <shortName evidence="1">SiR-HP</shortName>
        <shortName evidence="1">SiRHP</shortName>
        <ecNumber evidence="1">1.8.1.2</ecNumber>
    </recommendedName>
</protein>
<sequence>MTNTLAGPDRSRDISQPLEKLGPDEAMKVRSDYLRGTINEGLLDAITGAVSGDDNAKLMKFHGVYVQDDRDLRDERRRQKLEPAYSFLIRLRLPGGVATAAQWLKLDELARAYGNSSLRVTTRQTFQFHWVLKNDLKATIQGLHEVLIDTIAACGDVVRGVMASVNPSLSSLHAEVYDDARRVSEHAMPNMRAYHEIWYGEERVATSEPEEPFLGKQYLPRKFKIGLVIPPYNDIDVYTQDLGFIAIAENGRLIGYNIVIGGGMGRTDQAPETYPRLGDVIGFIPKEQILAATDAVVGTQRDFGDRTVRAHARFKYTIDTHGLDFIQGEIERRLGYALEPARPFEFVSNGDAYGWAKGENGRYHYTLFIENGRIVNREDVALLDGLRAIAAVHQGSFRMTPNQNVVIADIPAKQKPKIAALLREYGLDHRNEQSLLRLNSMACVALPTCGLAMAESERYLPTLVTKIETILAEKGLEKEPITIRMTGCPNGCARPYVAEIALTGRAPGKYNLYFGGGFHGQRLNKMYLENVGEDAILQAVDAIAGHYAQDKNPGEHFGDFTIRAGYVKEVRAGREFND</sequence>
<keyword id="KW-0004">4Fe-4S</keyword>
<keyword id="KW-0028">Amino-acid biosynthesis</keyword>
<keyword id="KW-0198">Cysteine biosynthesis</keyword>
<keyword id="KW-0349">Heme</keyword>
<keyword id="KW-0408">Iron</keyword>
<keyword id="KW-0411">Iron-sulfur</keyword>
<keyword id="KW-0479">Metal-binding</keyword>
<keyword id="KW-0521">NADP</keyword>
<keyword id="KW-0560">Oxidoreductase</keyword>
<keyword id="KW-1185">Reference proteome</keyword>
<comment type="function">
    <text evidence="1">Component of the sulfite reductase complex that catalyzes the 6-electron reduction of sulfite to sulfide. This is one of several activities required for the biosynthesis of L-cysteine from sulfate.</text>
</comment>
<comment type="catalytic activity">
    <reaction evidence="1">
        <text>hydrogen sulfide + 3 NADP(+) + 3 H2O = sulfite + 3 NADPH + 4 H(+)</text>
        <dbReference type="Rhea" id="RHEA:13801"/>
        <dbReference type="ChEBI" id="CHEBI:15377"/>
        <dbReference type="ChEBI" id="CHEBI:15378"/>
        <dbReference type="ChEBI" id="CHEBI:17359"/>
        <dbReference type="ChEBI" id="CHEBI:29919"/>
        <dbReference type="ChEBI" id="CHEBI:57783"/>
        <dbReference type="ChEBI" id="CHEBI:58349"/>
        <dbReference type="EC" id="1.8.1.2"/>
    </reaction>
</comment>
<comment type="cofactor">
    <cofactor evidence="1">
        <name>siroheme</name>
        <dbReference type="ChEBI" id="CHEBI:60052"/>
    </cofactor>
    <text evidence="1">Binds 1 siroheme per subunit.</text>
</comment>
<comment type="cofactor">
    <cofactor evidence="1">
        <name>[4Fe-4S] cluster</name>
        <dbReference type="ChEBI" id="CHEBI:49883"/>
    </cofactor>
    <text evidence="1">Binds 1 [4Fe-4S] cluster per subunit.</text>
</comment>
<comment type="pathway">
    <text evidence="1">Sulfur metabolism; hydrogen sulfide biosynthesis; hydrogen sulfide from sulfite (NADPH route): step 1/1.</text>
</comment>
<comment type="subunit">
    <text evidence="1">Alpha(8)-beta(8). The alpha component is a flavoprotein, the beta component is a hemoprotein.</text>
</comment>
<comment type="similarity">
    <text evidence="1">Belongs to the nitrite and sulfite reductase 4Fe-4S domain family.</text>
</comment>
<dbReference type="EC" id="1.8.1.2" evidence="1"/>
<dbReference type="EMBL" id="CP001280">
    <property type="protein sequence ID" value="ACK51355.1"/>
    <property type="molecule type" value="Genomic_DNA"/>
</dbReference>
<dbReference type="RefSeq" id="WP_012591424.1">
    <property type="nucleotide sequence ID" value="NC_011666.1"/>
</dbReference>
<dbReference type="SMR" id="B8EKI5"/>
<dbReference type="STRING" id="395965.Msil_2426"/>
<dbReference type="KEGG" id="msl:Msil_2426"/>
<dbReference type="eggNOG" id="COG0155">
    <property type="taxonomic scope" value="Bacteria"/>
</dbReference>
<dbReference type="HOGENOM" id="CLU_001975_3_2_5"/>
<dbReference type="OrthoDB" id="9803707at2"/>
<dbReference type="UniPathway" id="UPA00140">
    <property type="reaction ID" value="UER00207"/>
</dbReference>
<dbReference type="Proteomes" id="UP000002257">
    <property type="component" value="Chromosome"/>
</dbReference>
<dbReference type="GO" id="GO:0009337">
    <property type="term" value="C:sulfite reductase complex (NADPH)"/>
    <property type="evidence" value="ECO:0007669"/>
    <property type="project" value="InterPro"/>
</dbReference>
<dbReference type="GO" id="GO:0051539">
    <property type="term" value="F:4 iron, 4 sulfur cluster binding"/>
    <property type="evidence" value="ECO:0007669"/>
    <property type="project" value="UniProtKB-KW"/>
</dbReference>
<dbReference type="GO" id="GO:0020037">
    <property type="term" value="F:heme binding"/>
    <property type="evidence" value="ECO:0007669"/>
    <property type="project" value="InterPro"/>
</dbReference>
<dbReference type="GO" id="GO:0046872">
    <property type="term" value="F:metal ion binding"/>
    <property type="evidence" value="ECO:0007669"/>
    <property type="project" value="UniProtKB-KW"/>
</dbReference>
<dbReference type="GO" id="GO:0050661">
    <property type="term" value="F:NADP binding"/>
    <property type="evidence" value="ECO:0007669"/>
    <property type="project" value="InterPro"/>
</dbReference>
<dbReference type="GO" id="GO:0050311">
    <property type="term" value="F:sulfite reductase (ferredoxin) activity"/>
    <property type="evidence" value="ECO:0007669"/>
    <property type="project" value="TreeGrafter"/>
</dbReference>
<dbReference type="GO" id="GO:0004783">
    <property type="term" value="F:sulfite reductase (NADPH) activity"/>
    <property type="evidence" value="ECO:0007669"/>
    <property type="project" value="UniProtKB-UniRule"/>
</dbReference>
<dbReference type="GO" id="GO:0019344">
    <property type="term" value="P:cysteine biosynthetic process"/>
    <property type="evidence" value="ECO:0007669"/>
    <property type="project" value="UniProtKB-KW"/>
</dbReference>
<dbReference type="GO" id="GO:0070814">
    <property type="term" value="P:hydrogen sulfide biosynthetic process"/>
    <property type="evidence" value="ECO:0007669"/>
    <property type="project" value="UniProtKB-UniRule"/>
</dbReference>
<dbReference type="GO" id="GO:0000103">
    <property type="term" value="P:sulfate assimilation"/>
    <property type="evidence" value="ECO:0007669"/>
    <property type="project" value="UniProtKB-UniRule"/>
</dbReference>
<dbReference type="FunFam" id="3.30.413.10:FF:000003">
    <property type="entry name" value="Sulfite reductase [NADPH] hemoprotein beta-component"/>
    <property type="match status" value="1"/>
</dbReference>
<dbReference type="Gene3D" id="3.30.413.10">
    <property type="entry name" value="Sulfite Reductase Hemoprotein, domain 1"/>
    <property type="match status" value="2"/>
</dbReference>
<dbReference type="HAMAP" id="MF_01540">
    <property type="entry name" value="CysI"/>
    <property type="match status" value="1"/>
</dbReference>
<dbReference type="InterPro" id="IPR011786">
    <property type="entry name" value="CysI"/>
</dbReference>
<dbReference type="InterPro" id="IPR005117">
    <property type="entry name" value="NiRdtase/SiRdtase_haem-b_fer"/>
</dbReference>
<dbReference type="InterPro" id="IPR036136">
    <property type="entry name" value="Nit/Sulf_reduc_fer-like_dom_sf"/>
</dbReference>
<dbReference type="InterPro" id="IPR006067">
    <property type="entry name" value="NO2/SO3_Rdtase_4Fe4S_dom"/>
</dbReference>
<dbReference type="InterPro" id="IPR045169">
    <property type="entry name" value="NO2/SO3_Rdtase_4Fe4S_prot"/>
</dbReference>
<dbReference type="InterPro" id="IPR045854">
    <property type="entry name" value="NO2/SO3_Rdtase_4Fe4S_sf"/>
</dbReference>
<dbReference type="InterPro" id="IPR006066">
    <property type="entry name" value="NO2/SO3_Rdtase_FeS/sirohaem_BS"/>
</dbReference>
<dbReference type="NCBIfam" id="TIGR02041">
    <property type="entry name" value="CysI"/>
    <property type="match status" value="1"/>
</dbReference>
<dbReference type="NCBIfam" id="NF010029">
    <property type="entry name" value="PRK13504.1"/>
    <property type="match status" value="1"/>
</dbReference>
<dbReference type="PANTHER" id="PTHR11493:SF47">
    <property type="entry name" value="SULFITE REDUCTASE [NADPH] SUBUNIT BETA"/>
    <property type="match status" value="1"/>
</dbReference>
<dbReference type="PANTHER" id="PTHR11493">
    <property type="entry name" value="SULFITE REDUCTASE [NADPH] SUBUNIT BETA-RELATED"/>
    <property type="match status" value="1"/>
</dbReference>
<dbReference type="Pfam" id="PF01077">
    <property type="entry name" value="NIR_SIR"/>
    <property type="match status" value="1"/>
</dbReference>
<dbReference type="Pfam" id="PF03460">
    <property type="entry name" value="NIR_SIR_ferr"/>
    <property type="match status" value="2"/>
</dbReference>
<dbReference type="PRINTS" id="PR00397">
    <property type="entry name" value="SIROHAEM"/>
</dbReference>
<dbReference type="SUPFAM" id="SSF56014">
    <property type="entry name" value="Nitrite and sulphite reductase 4Fe-4S domain-like"/>
    <property type="match status" value="2"/>
</dbReference>
<dbReference type="SUPFAM" id="SSF55124">
    <property type="entry name" value="Nitrite/Sulfite reductase N-terminal domain-like"/>
    <property type="match status" value="2"/>
</dbReference>
<dbReference type="PROSITE" id="PS00365">
    <property type="entry name" value="NIR_SIR"/>
    <property type="match status" value="1"/>
</dbReference>
<gene>
    <name evidence="1" type="primary">cysI</name>
    <name type="ordered locus">Msil_2426</name>
</gene>
<organism>
    <name type="scientific">Methylocella silvestris (strain DSM 15510 / CIP 108128 / LMG 27833 / NCIMB 13906 / BL2)</name>
    <dbReference type="NCBI Taxonomy" id="395965"/>
    <lineage>
        <taxon>Bacteria</taxon>
        <taxon>Pseudomonadati</taxon>
        <taxon>Pseudomonadota</taxon>
        <taxon>Alphaproteobacteria</taxon>
        <taxon>Hyphomicrobiales</taxon>
        <taxon>Beijerinckiaceae</taxon>
        <taxon>Methylocella</taxon>
    </lineage>
</organism>
<name>CYSI_METSB</name>
<evidence type="ECO:0000255" key="1">
    <source>
        <dbReference type="HAMAP-Rule" id="MF_01540"/>
    </source>
</evidence>
<evidence type="ECO:0000256" key="2">
    <source>
        <dbReference type="SAM" id="MobiDB-lite"/>
    </source>
</evidence>
<feature type="chain" id="PRO_0000388500" description="Sulfite reductase [NADPH] hemoprotein beta-component">
    <location>
        <begin position="1"/>
        <end position="578"/>
    </location>
</feature>
<feature type="region of interest" description="Disordered" evidence="2">
    <location>
        <begin position="1"/>
        <end position="21"/>
    </location>
</feature>
<feature type="binding site" evidence="1">
    <location>
        <position position="443"/>
    </location>
    <ligand>
        <name>[4Fe-4S] cluster</name>
        <dbReference type="ChEBI" id="CHEBI:49883"/>
    </ligand>
</feature>
<feature type="binding site" evidence="1">
    <location>
        <position position="449"/>
    </location>
    <ligand>
        <name>[4Fe-4S] cluster</name>
        <dbReference type="ChEBI" id="CHEBI:49883"/>
    </ligand>
</feature>
<feature type="binding site" evidence="1">
    <location>
        <position position="488"/>
    </location>
    <ligand>
        <name>[4Fe-4S] cluster</name>
        <dbReference type="ChEBI" id="CHEBI:49883"/>
    </ligand>
</feature>
<feature type="binding site" evidence="1">
    <location>
        <position position="492"/>
    </location>
    <ligand>
        <name>[4Fe-4S] cluster</name>
        <dbReference type="ChEBI" id="CHEBI:49883"/>
    </ligand>
</feature>
<feature type="binding site" description="axial binding residue" evidence="1">
    <location>
        <position position="492"/>
    </location>
    <ligand>
        <name>siroheme</name>
        <dbReference type="ChEBI" id="CHEBI:60052"/>
    </ligand>
    <ligandPart>
        <name>Fe</name>
        <dbReference type="ChEBI" id="CHEBI:18248"/>
    </ligandPart>
</feature>
<accession>B8EKI5</accession>
<reference key="1">
    <citation type="journal article" date="2010" name="J. Bacteriol.">
        <title>Complete genome sequence of the aerobic facultative methanotroph Methylocella silvestris BL2.</title>
        <authorList>
            <person name="Chen Y."/>
            <person name="Crombie A."/>
            <person name="Rahman M.T."/>
            <person name="Dedysh S.N."/>
            <person name="Liesack W."/>
            <person name="Stott M.B."/>
            <person name="Alam M."/>
            <person name="Theisen A.R."/>
            <person name="Murrell J.C."/>
            <person name="Dunfield P.F."/>
        </authorList>
    </citation>
    <scope>NUCLEOTIDE SEQUENCE [LARGE SCALE GENOMIC DNA]</scope>
    <source>
        <strain>DSM 15510 / CIP 108128 / LMG 27833 / NCIMB 13906 / BL2</strain>
    </source>
</reference>
<proteinExistence type="inferred from homology"/>